<organism>
    <name type="scientific">Taxus baccata</name>
    <name type="common">English yew</name>
    <dbReference type="NCBI Taxonomy" id="25629"/>
    <lineage>
        <taxon>Eukaryota</taxon>
        <taxon>Viridiplantae</taxon>
        <taxon>Streptophyta</taxon>
        <taxon>Embryophyta</taxon>
        <taxon>Tracheophyta</taxon>
        <taxon>Spermatophyta</taxon>
        <taxon>Pinopsida</taxon>
        <taxon>Pinidae</taxon>
        <taxon>Conifers II</taxon>
        <taxon>Cupressales</taxon>
        <taxon>Taxaceae</taxon>
        <taxon>Taxus</taxon>
    </lineage>
</organism>
<sequence>DDPTSTFTCPGGSNYK</sequence>
<dbReference type="GO" id="GO:0005576">
    <property type="term" value="C:extracellular region"/>
    <property type="evidence" value="ECO:0007669"/>
    <property type="project" value="UniProtKB-SubCell"/>
</dbReference>
<accession>P85356</accession>
<comment type="subcellular location">
    <subcellularLocation>
        <location evidence="1">Secreted</location>
    </subcellularLocation>
    <subcellularLocation>
        <location evidence="4">Secreted</location>
        <location evidence="4">Cell wall</location>
    </subcellularLocation>
</comment>
<comment type="similarity">
    <text evidence="3">Belongs to the thaumatin family.</text>
</comment>
<keyword id="KW-0134">Cell wall</keyword>
<keyword id="KW-0903">Direct protein sequencing</keyword>
<keyword id="KW-1015">Disulfide bond</keyword>
<keyword id="KW-0964">Secreted</keyword>
<protein>
    <recommendedName>
        <fullName>Thaumatin-like protein 4</fullName>
    </recommendedName>
</protein>
<evidence type="ECO:0000250" key="1">
    <source>
        <dbReference type="UniProtKB" id="O80327"/>
    </source>
</evidence>
<evidence type="ECO:0000250" key="2">
    <source>
        <dbReference type="UniProtKB" id="P33679"/>
    </source>
</evidence>
<evidence type="ECO:0000255" key="3"/>
<evidence type="ECO:0000269" key="4">
    <source>
    </source>
</evidence>
<evidence type="ECO:0000303" key="5">
    <source>
    </source>
</evidence>
<evidence type="ECO:0000305" key="6"/>
<feature type="chain" id="PRO_0000315925" description="Thaumatin-like protein 4">
    <location>
        <begin position="1" status="less than"/>
        <end position="16" status="greater than"/>
    </location>
</feature>
<feature type="disulfide bond" evidence="2">
    <location>
        <begin status="unknown"/>
        <end position="9"/>
    </location>
</feature>
<feature type="unsure residue" description="K or Q" evidence="4">
    <location>
        <position position="16"/>
    </location>
</feature>
<feature type="non-terminal residue" evidence="5">
    <location>
        <position position="1"/>
    </location>
</feature>
<feature type="non-terminal residue" evidence="5">
    <location>
        <position position="16"/>
    </location>
</feature>
<reference evidence="6" key="1">
    <citation type="journal article" date="2009" name="J. Plant Physiol.">
        <title>Analysis of the soluble cell wall proteome of gymnosperms.</title>
        <authorList>
            <person name="Uzal E.N."/>
            <person name="Gomez-Ros L.V."/>
            <person name="Hernandez J.A."/>
            <person name="Pedreno M.A."/>
            <person name="Cuello J."/>
            <person name="Ros Barcelo A."/>
        </authorList>
    </citation>
    <scope>PROTEIN SEQUENCE</scope>
    <scope>SUBCELLULAR LOCATION</scope>
    <source>
        <strain evidence="4">PC-1008</strain>
        <tissue evidence="4">Callus</tissue>
    </source>
</reference>
<name>TLP4_TAXBA</name>
<proteinExistence type="evidence at protein level"/>